<keyword id="KW-0067">ATP-binding</keyword>
<keyword id="KW-0315">Glutamine amidotransferase</keyword>
<keyword id="KW-0436">Ligase</keyword>
<keyword id="KW-0460">Magnesium</keyword>
<keyword id="KW-0479">Metal-binding</keyword>
<keyword id="KW-0547">Nucleotide-binding</keyword>
<keyword id="KW-0665">Pyrimidine biosynthesis</keyword>
<reference key="1">
    <citation type="journal article" date="2009" name="Environ. Microbiol.">
        <title>Contribution of mobile genetic elements to Desulfovibrio vulgaris genome plasticity.</title>
        <authorList>
            <person name="Walker C.B."/>
            <person name="Stolyar S."/>
            <person name="Chivian D."/>
            <person name="Pinel N."/>
            <person name="Gabster J.A."/>
            <person name="Dehal P.S."/>
            <person name="He Z."/>
            <person name="Yang Z.K."/>
            <person name="Yen H.C."/>
            <person name="Zhou J."/>
            <person name="Wall J.D."/>
            <person name="Hazen T.C."/>
            <person name="Arkin A.P."/>
            <person name="Stahl D.A."/>
        </authorList>
    </citation>
    <scope>NUCLEOTIDE SEQUENCE [LARGE SCALE GENOMIC DNA]</scope>
    <source>
        <strain>DP4</strain>
    </source>
</reference>
<organism>
    <name type="scientific">Nitratidesulfovibrio vulgaris (strain DP4)</name>
    <name type="common">Desulfovibrio vulgaris</name>
    <dbReference type="NCBI Taxonomy" id="391774"/>
    <lineage>
        <taxon>Bacteria</taxon>
        <taxon>Pseudomonadati</taxon>
        <taxon>Thermodesulfobacteriota</taxon>
        <taxon>Desulfovibrionia</taxon>
        <taxon>Desulfovibrionales</taxon>
        <taxon>Desulfovibrionaceae</taxon>
        <taxon>Nitratidesulfovibrio</taxon>
    </lineage>
</organism>
<evidence type="ECO:0000255" key="1">
    <source>
        <dbReference type="HAMAP-Rule" id="MF_01227"/>
    </source>
</evidence>
<accession>A1VDL2</accession>
<dbReference type="EC" id="6.3.4.2" evidence="1"/>
<dbReference type="EMBL" id="CP000527">
    <property type="protein sequence ID" value="ABM28528.1"/>
    <property type="molecule type" value="Genomic_DNA"/>
</dbReference>
<dbReference type="RefSeq" id="WP_010938914.1">
    <property type="nucleotide sequence ID" value="NC_008751.1"/>
</dbReference>
<dbReference type="SMR" id="A1VDL2"/>
<dbReference type="KEGG" id="dvl:Dvul_1511"/>
<dbReference type="HOGENOM" id="CLU_011675_5_0_7"/>
<dbReference type="UniPathway" id="UPA00159">
    <property type="reaction ID" value="UER00277"/>
</dbReference>
<dbReference type="Proteomes" id="UP000009173">
    <property type="component" value="Chromosome"/>
</dbReference>
<dbReference type="GO" id="GO:0005829">
    <property type="term" value="C:cytosol"/>
    <property type="evidence" value="ECO:0007669"/>
    <property type="project" value="TreeGrafter"/>
</dbReference>
<dbReference type="GO" id="GO:0005524">
    <property type="term" value="F:ATP binding"/>
    <property type="evidence" value="ECO:0007669"/>
    <property type="project" value="UniProtKB-KW"/>
</dbReference>
<dbReference type="GO" id="GO:0003883">
    <property type="term" value="F:CTP synthase activity"/>
    <property type="evidence" value="ECO:0007669"/>
    <property type="project" value="UniProtKB-UniRule"/>
</dbReference>
<dbReference type="GO" id="GO:0004359">
    <property type="term" value="F:glutaminase activity"/>
    <property type="evidence" value="ECO:0007669"/>
    <property type="project" value="RHEA"/>
</dbReference>
<dbReference type="GO" id="GO:0042802">
    <property type="term" value="F:identical protein binding"/>
    <property type="evidence" value="ECO:0007669"/>
    <property type="project" value="TreeGrafter"/>
</dbReference>
<dbReference type="GO" id="GO:0046872">
    <property type="term" value="F:metal ion binding"/>
    <property type="evidence" value="ECO:0007669"/>
    <property type="project" value="UniProtKB-KW"/>
</dbReference>
<dbReference type="GO" id="GO:0044210">
    <property type="term" value="P:'de novo' CTP biosynthetic process"/>
    <property type="evidence" value="ECO:0007669"/>
    <property type="project" value="UniProtKB-UniRule"/>
</dbReference>
<dbReference type="GO" id="GO:0019856">
    <property type="term" value="P:pyrimidine nucleobase biosynthetic process"/>
    <property type="evidence" value="ECO:0007669"/>
    <property type="project" value="TreeGrafter"/>
</dbReference>
<dbReference type="CDD" id="cd03113">
    <property type="entry name" value="CTPS_N"/>
    <property type="match status" value="1"/>
</dbReference>
<dbReference type="CDD" id="cd01746">
    <property type="entry name" value="GATase1_CTP_Synthase"/>
    <property type="match status" value="1"/>
</dbReference>
<dbReference type="FunFam" id="3.40.50.300:FF:000009">
    <property type="entry name" value="CTP synthase"/>
    <property type="match status" value="1"/>
</dbReference>
<dbReference type="FunFam" id="3.40.50.880:FF:000002">
    <property type="entry name" value="CTP synthase"/>
    <property type="match status" value="1"/>
</dbReference>
<dbReference type="Gene3D" id="3.40.50.880">
    <property type="match status" value="1"/>
</dbReference>
<dbReference type="Gene3D" id="3.40.50.300">
    <property type="entry name" value="P-loop containing nucleotide triphosphate hydrolases"/>
    <property type="match status" value="1"/>
</dbReference>
<dbReference type="HAMAP" id="MF_01227">
    <property type="entry name" value="PyrG"/>
    <property type="match status" value="1"/>
</dbReference>
<dbReference type="InterPro" id="IPR029062">
    <property type="entry name" value="Class_I_gatase-like"/>
</dbReference>
<dbReference type="InterPro" id="IPR004468">
    <property type="entry name" value="CTP_synthase"/>
</dbReference>
<dbReference type="InterPro" id="IPR017456">
    <property type="entry name" value="CTP_synthase_N"/>
</dbReference>
<dbReference type="InterPro" id="IPR017926">
    <property type="entry name" value="GATASE"/>
</dbReference>
<dbReference type="InterPro" id="IPR033828">
    <property type="entry name" value="GATase1_CTP_Synthase"/>
</dbReference>
<dbReference type="InterPro" id="IPR027417">
    <property type="entry name" value="P-loop_NTPase"/>
</dbReference>
<dbReference type="NCBIfam" id="NF003792">
    <property type="entry name" value="PRK05380.1"/>
    <property type="match status" value="1"/>
</dbReference>
<dbReference type="NCBIfam" id="TIGR00337">
    <property type="entry name" value="PyrG"/>
    <property type="match status" value="1"/>
</dbReference>
<dbReference type="PANTHER" id="PTHR11550">
    <property type="entry name" value="CTP SYNTHASE"/>
    <property type="match status" value="1"/>
</dbReference>
<dbReference type="PANTHER" id="PTHR11550:SF0">
    <property type="entry name" value="CTP SYNTHASE-RELATED"/>
    <property type="match status" value="1"/>
</dbReference>
<dbReference type="Pfam" id="PF06418">
    <property type="entry name" value="CTP_synth_N"/>
    <property type="match status" value="1"/>
</dbReference>
<dbReference type="Pfam" id="PF00117">
    <property type="entry name" value="GATase"/>
    <property type="match status" value="1"/>
</dbReference>
<dbReference type="SUPFAM" id="SSF52317">
    <property type="entry name" value="Class I glutamine amidotransferase-like"/>
    <property type="match status" value="1"/>
</dbReference>
<dbReference type="SUPFAM" id="SSF52540">
    <property type="entry name" value="P-loop containing nucleoside triphosphate hydrolases"/>
    <property type="match status" value="1"/>
</dbReference>
<dbReference type="PROSITE" id="PS51273">
    <property type="entry name" value="GATASE_TYPE_1"/>
    <property type="match status" value="1"/>
</dbReference>
<gene>
    <name evidence="1" type="primary">pyrG</name>
    <name type="ordered locus">Dvul_1511</name>
</gene>
<protein>
    <recommendedName>
        <fullName evidence="1">CTP synthase</fullName>
        <ecNumber evidence="1">6.3.4.2</ecNumber>
    </recommendedName>
    <alternativeName>
        <fullName evidence="1">Cytidine 5'-triphosphate synthase</fullName>
    </alternativeName>
    <alternativeName>
        <fullName evidence="1">Cytidine triphosphate synthetase</fullName>
        <shortName evidence="1">CTP synthetase</shortName>
        <shortName evidence="1">CTPS</shortName>
    </alternativeName>
    <alternativeName>
        <fullName evidence="1">UTP--ammonia ligase</fullName>
    </alternativeName>
</protein>
<sequence>MKTKFIFITGGVLSSLGKGLAAASVGALLKARGLKVTIQKLDPYINVDPGTMNPFQHGEVYVTDDGAETDLDLGHYERYLAEPMSQKNNYTSGSIYHRVITKERRGDYLGGTVQVIPHVTDEIKNAVLSLAEDDPDVALIEIGGTVGDIEGLPFLEAIRQLRGDLGKDRCLYIHLTLVPYLRAAGEHKTKPTQHSVKELRSIGIQPDIILCRCEEAITADLKRKIALFCNVDQDAVFSAVDVKNIYEVPLRFYEEGFDQKIAIMLRLPAKNPNLEPWETLVDTCAHPQGRVTIGIVGKYVDLKEAYKSLHEALVHGGVANKVAVDLKYVNSEEITEENVAEALKGLDGILVPGGFGYRGVEGKILTIRYARENRVPFFGICLGMQCAVIEFARNVMGLEDANSEEFNELSKNKVIYLMTEWFDHRRQAVERRDSSSDKGGTMRLGSYPCVVVPDTKAHDAYGVKHIDERHRHRFEFNKAYFDAMAQSGMVFSGLSPDGELVEIVELPDHPWFLGCQFHPEFKSNPMQPHPLFREFIRAAKTHPAGKR</sequence>
<comment type="function">
    <text evidence="1">Catalyzes the ATP-dependent amination of UTP to CTP with either L-glutamine or ammonia as the source of nitrogen. Regulates intracellular CTP levels through interactions with the four ribonucleotide triphosphates.</text>
</comment>
<comment type="catalytic activity">
    <reaction evidence="1">
        <text>UTP + L-glutamine + ATP + H2O = CTP + L-glutamate + ADP + phosphate + 2 H(+)</text>
        <dbReference type="Rhea" id="RHEA:26426"/>
        <dbReference type="ChEBI" id="CHEBI:15377"/>
        <dbReference type="ChEBI" id="CHEBI:15378"/>
        <dbReference type="ChEBI" id="CHEBI:29985"/>
        <dbReference type="ChEBI" id="CHEBI:30616"/>
        <dbReference type="ChEBI" id="CHEBI:37563"/>
        <dbReference type="ChEBI" id="CHEBI:43474"/>
        <dbReference type="ChEBI" id="CHEBI:46398"/>
        <dbReference type="ChEBI" id="CHEBI:58359"/>
        <dbReference type="ChEBI" id="CHEBI:456216"/>
        <dbReference type="EC" id="6.3.4.2"/>
    </reaction>
</comment>
<comment type="catalytic activity">
    <reaction evidence="1">
        <text>L-glutamine + H2O = L-glutamate + NH4(+)</text>
        <dbReference type="Rhea" id="RHEA:15889"/>
        <dbReference type="ChEBI" id="CHEBI:15377"/>
        <dbReference type="ChEBI" id="CHEBI:28938"/>
        <dbReference type="ChEBI" id="CHEBI:29985"/>
        <dbReference type="ChEBI" id="CHEBI:58359"/>
    </reaction>
</comment>
<comment type="catalytic activity">
    <reaction evidence="1">
        <text>UTP + NH4(+) + ATP = CTP + ADP + phosphate + 2 H(+)</text>
        <dbReference type="Rhea" id="RHEA:16597"/>
        <dbReference type="ChEBI" id="CHEBI:15378"/>
        <dbReference type="ChEBI" id="CHEBI:28938"/>
        <dbReference type="ChEBI" id="CHEBI:30616"/>
        <dbReference type="ChEBI" id="CHEBI:37563"/>
        <dbReference type="ChEBI" id="CHEBI:43474"/>
        <dbReference type="ChEBI" id="CHEBI:46398"/>
        <dbReference type="ChEBI" id="CHEBI:456216"/>
    </reaction>
</comment>
<comment type="activity regulation">
    <text evidence="1">Allosterically activated by GTP, when glutamine is the substrate; GTP has no effect on the reaction when ammonia is the substrate. The allosteric effector GTP functions by stabilizing the protein conformation that binds the tetrahedral intermediate(s) formed during glutamine hydrolysis. Inhibited by the product CTP, via allosteric rather than competitive inhibition.</text>
</comment>
<comment type="pathway">
    <text evidence="1">Pyrimidine metabolism; CTP biosynthesis via de novo pathway; CTP from UDP: step 2/2.</text>
</comment>
<comment type="subunit">
    <text evidence="1">Homotetramer.</text>
</comment>
<comment type="miscellaneous">
    <text evidence="1">CTPSs have evolved a hybrid strategy for distinguishing between UTP and CTP. The overlapping regions of the product feedback inhibitory and substrate sites recognize a common feature in both compounds, the triphosphate moiety. To differentiate isosteric substrate and product pyrimidine rings, an additional pocket far from the expected kinase/ligase catalytic site, specifically recognizes the cytosine and ribose portions of the product inhibitor.</text>
</comment>
<comment type="similarity">
    <text evidence="1">Belongs to the CTP synthase family.</text>
</comment>
<feature type="chain" id="PRO_1000139436" description="CTP synthase">
    <location>
        <begin position="1"/>
        <end position="547"/>
    </location>
</feature>
<feature type="domain" description="Glutamine amidotransferase type-1" evidence="1">
    <location>
        <begin position="292"/>
        <end position="545"/>
    </location>
</feature>
<feature type="region of interest" description="Amidoligase domain" evidence="1">
    <location>
        <begin position="1"/>
        <end position="267"/>
    </location>
</feature>
<feature type="active site" description="Nucleophile; for glutamine hydrolysis" evidence="1">
    <location>
        <position position="381"/>
    </location>
</feature>
<feature type="active site" evidence="1">
    <location>
        <position position="518"/>
    </location>
</feature>
<feature type="active site" evidence="1">
    <location>
        <position position="520"/>
    </location>
</feature>
<feature type="binding site" evidence="1">
    <location>
        <position position="14"/>
    </location>
    <ligand>
        <name>CTP</name>
        <dbReference type="ChEBI" id="CHEBI:37563"/>
        <note>allosteric inhibitor</note>
    </ligand>
</feature>
<feature type="binding site" evidence="1">
    <location>
        <position position="14"/>
    </location>
    <ligand>
        <name>UTP</name>
        <dbReference type="ChEBI" id="CHEBI:46398"/>
    </ligand>
</feature>
<feature type="binding site" evidence="1">
    <location>
        <begin position="15"/>
        <end position="20"/>
    </location>
    <ligand>
        <name>ATP</name>
        <dbReference type="ChEBI" id="CHEBI:30616"/>
    </ligand>
</feature>
<feature type="binding site" evidence="1">
    <location>
        <position position="72"/>
    </location>
    <ligand>
        <name>ATP</name>
        <dbReference type="ChEBI" id="CHEBI:30616"/>
    </ligand>
</feature>
<feature type="binding site" evidence="1">
    <location>
        <position position="72"/>
    </location>
    <ligand>
        <name>Mg(2+)</name>
        <dbReference type="ChEBI" id="CHEBI:18420"/>
    </ligand>
</feature>
<feature type="binding site" evidence="1">
    <location>
        <position position="141"/>
    </location>
    <ligand>
        <name>Mg(2+)</name>
        <dbReference type="ChEBI" id="CHEBI:18420"/>
    </ligand>
</feature>
<feature type="binding site" evidence="1">
    <location>
        <begin position="148"/>
        <end position="150"/>
    </location>
    <ligand>
        <name>CTP</name>
        <dbReference type="ChEBI" id="CHEBI:37563"/>
        <note>allosteric inhibitor</note>
    </ligand>
</feature>
<feature type="binding site" evidence="1">
    <location>
        <begin position="188"/>
        <end position="193"/>
    </location>
    <ligand>
        <name>CTP</name>
        <dbReference type="ChEBI" id="CHEBI:37563"/>
        <note>allosteric inhibitor</note>
    </ligand>
</feature>
<feature type="binding site" evidence="1">
    <location>
        <begin position="188"/>
        <end position="193"/>
    </location>
    <ligand>
        <name>UTP</name>
        <dbReference type="ChEBI" id="CHEBI:46398"/>
    </ligand>
</feature>
<feature type="binding site" evidence="1">
    <location>
        <position position="224"/>
    </location>
    <ligand>
        <name>CTP</name>
        <dbReference type="ChEBI" id="CHEBI:37563"/>
        <note>allosteric inhibitor</note>
    </ligand>
</feature>
<feature type="binding site" evidence="1">
    <location>
        <position position="224"/>
    </location>
    <ligand>
        <name>UTP</name>
        <dbReference type="ChEBI" id="CHEBI:46398"/>
    </ligand>
</feature>
<feature type="binding site" evidence="1">
    <location>
        <position position="354"/>
    </location>
    <ligand>
        <name>L-glutamine</name>
        <dbReference type="ChEBI" id="CHEBI:58359"/>
    </ligand>
</feature>
<feature type="binding site" evidence="1">
    <location>
        <begin position="382"/>
        <end position="385"/>
    </location>
    <ligand>
        <name>L-glutamine</name>
        <dbReference type="ChEBI" id="CHEBI:58359"/>
    </ligand>
</feature>
<feature type="binding site" evidence="1">
    <location>
        <position position="405"/>
    </location>
    <ligand>
        <name>L-glutamine</name>
        <dbReference type="ChEBI" id="CHEBI:58359"/>
    </ligand>
</feature>
<feature type="binding site" evidence="1">
    <location>
        <position position="473"/>
    </location>
    <ligand>
        <name>L-glutamine</name>
        <dbReference type="ChEBI" id="CHEBI:58359"/>
    </ligand>
</feature>
<proteinExistence type="inferred from homology"/>
<name>PYRG_NITV4</name>